<comment type="subcellular location">
    <subcellularLocation>
        <location evidence="1">Cell membrane</location>
        <topology evidence="1">Lipid-anchor</topology>
    </subcellularLocation>
</comment>
<comment type="similarity">
    <text evidence="2">Belongs to the staphylococcal tandem lipoprotein family.</text>
</comment>
<comment type="sequence caution" evidence="2">
    <conflict type="erroneous initiation">
        <sequence resource="EMBL-CDS" id="BAB41627"/>
    </conflict>
</comment>
<reference key="1">
    <citation type="journal article" date="2001" name="Lancet">
        <title>Whole genome sequencing of meticillin-resistant Staphylococcus aureus.</title>
        <authorList>
            <person name="Kuroda M."/>
            <person name="Ohta T."/>
            <person name="Uchiyama I."/>
            <person name="Baba T."/>
            <person name="Yuzawa H."/>
            <person name="Kobayashi I."/>
            <person name="Cui L."/>
            <person name="Oguchi A."/>
            <person name="Aoki K."/>
            <person name="Nagai Y."/>
            <person name="Lian J.-Q."/>
            <person name="Ito T."/>
            <person name="Kanamori M."/>
            <person name="Matsumaru H."/>
            <person name="Maruyama A."/>
            <person name="Murakami H."/>
            <person name="Hosoyama A."/>
            <person name="Mizutani-Ui Y."/>
            <person name="Takahashi N.K."/>
            <person name="Sawano T."/>
            <person name="Inoue R."/>
            <person name="Kaito C."/>
            <person name="Sekimizu K."/>
            <person name="Hirakawa H."/>
            <person name="Kuhara S."/>
            <person name="Goto S."/>
            <person name="Yabuzaki J."/>
            <person name="Kanehisa M."/>
            <person name="Yamashita A."/>
            <person name="Oshima K."/>
            <person name="Furuya K."/>
            <person name="Yoshino C."/>
            <person name="Shiba T."/>
            <person name="Hattori M."/>
            <person name="Ogasawara N."/>
            <person name="Hayashi H."/>
            <person name="Hiramatsu K."/>
        </authorList>
    </citation>
    <scope>NUCLEOTIDE SEQUENCE [LARGE SCALE GENOMIC DNA]</scope>
    <source>
        <strain>N315</strain>
    </source>
</reference>
<sequence>MGYSKRFALYISVMILIFAIAGCGKSDETKEGSKEEQIKKSFAKTLDMYPIKNLEDLYDKEGYRDGEFKKGDKGTWVISSVMVKQPKGEIMKSRGMYLFLNRNTRTAKGYFIVDETSNDTLKKTEDKEKRYPVKMVNNKIVPIDPINDKGVKKEIENFKFFSQYGDFKELKNYKNGEVSYNSEAPIYSAKYQLKNNDYNVKQLRKRYDISTEKAPKLLLKGTGDLKGSSIGHKDIEFTFVENQEENIFFTDSLEFTSSENY</sequence>
<dbReference type="EMBL" id="BA000018">
    <property type="protein sequence ID" value="BAB41627.1"/>
    <property type="status" value="ALT_INIT"/>
    <property type="molecule type" value="Genomic_DNA"/>
</dbReference>
<dbReference type="PIR" id="H89808">
    <property type="entry name" value="H89808"/>
</dbReference>
<dbReference type="RefSeq" id="WP_000542365.1">
    <property type="nucleotide sequence ID" value="NC_002745.2"/>
</dbReference>
<dbReference type="SMR" id="Q7A7G4"/>
<dbReference type="EnsemblBacteria" id="BAB41627">
    <property type="protein sequence ID" value="BAB41627"/>
    <property type="gene ID" value="BAB41627"/>
</dbReference>
<dbReference type="KEGG" id="sau:SA0398"/>
<dbReference type="HOGENOM" id="CLU_071589_0_1_9"/>
<dbReference type="GO" id="GO:0005886">
    <property type="term" value="C:plasma membrane"/>
    <property type="evidence" value="ECO:0007669"/>
    <property type="project" value="UniProtKB-SubCell"/>
</dbReference>
<dbReference type="Gene3D" id="2.50.20.40">
    <property type="match status" value="1"/>
</dbReference>
<dbReference type="InterPro" id="IPR007595">
    <property type="entry name" value="Csa"/>
</dbReference>
<dbReference type="InterPro" id="IPR038641">
    <property type="entry name" value="Csa_sf"/>
</dbReference>
<dbReference type="NCBIfam" id="TIGR01742">
    <property type="entry name" value="SA_tandem_lipo"/>
    <property type="match status" value="1"/>
</dbReference>
<dbReference type="Pfam" id="PF04507">
    <property type="entry name" value="DUF576"/>
    <property type="match status" value="1"/>
</dbReference>
<dbReference type="PROSITE" id="PS51257">
    <property type="entry name" value="PROKAR_LIPOPROTEIN"/>
    <property type="match status" value="1"/>
</dbReference>
<keyword id="KW-1003">Cell membrane</keyword>
<keyword id="KW-0449">Lipoprotein</keyword>
<keyword id="KW-0472">Membrane</keyword>
<keyword id="KW-0564">Palmitate</keyword>
<keyword id="KW-0732">Signal</keyword>
<feature type="signal peptide" evidence="1">
    <location>
        <begin position="1"/>
        <end position="22"/>
    </location>
</feature>
<feature type="chain" id="PRO_0000282144" description="Uncharacterized lipoprotein SA0398">
    <location>
        <begin position="23"/>
        <end position="261"/>
    </location>
</feature>
<feature type="lipid moiety-binding region" description="N-palmitoyl cysteine" evidence="1">
    <location>
        <position position="23"/>
    </location>
</feature>
<feature type="lipid moiety-binding region" description="S-diacylglycerol cysteine" evidence="1">
    <location>
        <position position="23"/>
    </location>
</feature>
<proteinExistence type="inferred from homology"/>
<gene>
    <name type="primary">lpl3</name>
    <name type="ordered locus">SA0398</name>
</gene>
<accession>Q7A7G4</accession>
<name>Y398_STAAN</name>
<protein>
    <recommendedName>
        <fullName>Uncharacterized lipoprotein SA0398</fullName>
    </recommendedName>
</protein>
<organism>
    <name type="scientific">Staphylococcus aureus (strain N315)</name>
    <dbReference type="NCBI Taxonomy" id="158879"/>
    <lineage>
        <taxon>Bacteria</taxon>
        <taxon>Bacillati</taxon>
        <taxon>Bacillota</taxon>
        <taxon>Bacilli</taxon>
        <taxon>Bacillales</taxon>
        <taxon>Staphylococcaceae</taxon>
        <taxon>Staphylococcus</taxon>
    </lineage>
</organism>
<evidence type="ECO:0000255" key="1">
    <source>
        <dbReference type="PROSITE-ProRule" id="PRU00303"/>
    </source>
</evidence>
<evidence type="ECO:0000305" key="2"/>